<sequence length="311" mass="33876">MAAARAPRALTSASPGSGKAKLTHPGKAILAGGLAGGIEICITFPTEYVKTQLQLDERSHPPRYRGIGDCVRQTVRSHGLLGLYRGLSSLLYGSIPKAAVRFGTFEFLSNHMRDAQGRLDSTRGLLCGLGAGVPEAVVVVCPMETIKVKFIHDQTSASPKYRGFFHGVREIVREQGLKGTYQGLTATVLKQGSNQGIRFFVMTSLRNWYRGDNPNKPMNPLITGVFGAIAGAASVFGNTPLDVIKTRMQGLEAHKYRNTLDCGLQILRNEGLKAFYKGTVPRLGRVCLDVAIVFIIYDEVVKLLNKVWKAD</sequence>
<feature type="propeptide" id="PRO_0000456574" description="Removed in mature form" evidence="1">
    <location>
        <begin position="1"/>
        <end position="13"/>
    </location>
</feature>
<feature type="chain" id="PRO_0000019261" description="Tricarboxylate transport protein, mitochondrial">
    <location>
        <begin position="14"/>
        <end position="311"/>
    </location>
</feature>
<feature type="transmembrane region" description="Helical; Name=1" evidence="4">
    <location>
        <begin position="29"/>
        <end position="46"/>
    </location>
</feature>
<feature type="transmembrane region" description="Helical; Name=2" evidence="4">
    <location>
        <begin position="86"/>
        <end position="105"/>
    </location>
</feature>
<feature type="transmembrane region" description="Helical; Name=3" evidence="4">
    <location>
        <begin position="129"/>
        <end position="143"/>
    </location>
</feature>
<feature type="transmembrane region" description="Helical; Name=4" evidence="4">
    <location>
        <begin position="183"/>
        <end position="202"/>
    </location>
</feature>
<feature type="transmembrane region" description="Helical; Name=5" evidence="4">
    <location>
        <begin position="224"/>
        <end position="241"/>
    </location>
</feature>
<feature type="transmembrane region" description="Helical; Name=6" evidence="4">
    <location>
        <begin position="278"/>
        <end position="297"/>
    </location>
</feature>
<feature type="repeat" description="Solcar 1" evidence="5">
    <location>
        <begin position="23"/>
        <end position="111"/>
    </location>
</feature>
<feature type="repeat" description="Solcar 2" evidence="5">
    <location>
        <begin position="122"/>
        <end position="208"/>
    </location>
</feature>
<feature type="repeat" description="Solcar 3" evidence="5">
    <location>
        <begin position="218"/>
        <end position="303"/>
    </location>
</feature>
<feature type="region of interest" description="Disordered" evidence="6">
    <location>
        <begin position="1"/>
        <end position="22"/>
    </location>
</feature>
<feature type="compositionally biased region" description="Low complexity" evidence="6">
    <location>
        <begin position="1"/>
        <end position="15"/>
    </location>
</feature>
<feature type="modified residue" description="Phosphoserine" evidence="2">
    <location>
        <position position="156"/>
    </location>
</feature>
<evidence type="ECO:0000250" key="1">
    <source>
        <dbReference type="UniProtKB" id="P32089"/>
    </source>
</evidence>
<evidence type="ECO:0000250" key="2">
    <source>
        <dbReference type="UniProtKB" id="P53007"/>
    </source>
</evidence>
<evidence type="ECO:0000250" key="3">
    <source>
        <dbReference type="UniProtKB" id="Q8JZU2"/>
    </source>
</evidence>
<evidence type="ECO:0000255" key="4"/>
<evidence type="ECO:0000255" key="5">
    <source>
        <dbReference type="PROSITE-ProRule" id="PRU00282"/>
    </source>
</evidence>
<evidence type="ECO:0000256" key="6">
    <source>
        <dbReference type="SAM" id="MobiDB-lite"/>
    </source>
</evidence>
<evidence type="ECO:0000269" key="7">
    <source>
    </source>
</evidence>
<evidence type="ECO:0000269" key="8">
    <source>
    </source>
</evidence>
<evidence type="ECO:0000303" key="9">
    <source>
    </source>
</evidence>
<evidence type="ECO:0000305" key="10"/>
<accession>P79110</accession>
<keyword id="KW-0050">Antiport</keyword>
<keyword id="KW-0472">Membrane</keyword>
<keyword id="KW-0496">Mitochondrion</keyword>
<keyword id="KW-0999">Mitochondrion inner membrane</keyword>
<keyword id="KW-0597">Phosphoprotein</keyword>
<keyword id="KW-1185">Reference proteome</keyword>
<keyword id="KW-0677">Repeat</keyword>
<keyword id="KW-0812">Transmembrane</keyword>
<keyword id="KW-1133">Transmembrane helix</keyword>
<keyword id="KW-0813">Transport</keyword>
<gene>
    <name type="primary">SLC25A1</name>
    <name type="synonym">SLC20A3</name>
</gene>
<dbReference type="EMBL" id="X97773">
    <property type="protein sequence ID" value="CAA66375.1"/>
    <property type="molecule type" value="mRNA"/>
</dbReference>
<dbReference type="RefSeq" id="NP_777081.1">
    <property type="nucleotide sequence ID" value="NM_174656.2"/>
</dbReference>
<dbReference type="SMR" id="P79110"/>
<dbReference type="FunCoup" id="P79110">
    <property type="interactions" value="1861"/>
</dbReference>
<dbReference type="STRING" id="9913.ENSBTAP00000058261"/>
<dbReference type="PaxDb" id="9913-ENSBTAP00000011242"/>
<dbReference type="PeptideAtlas" id="P79110"/>
<dbReference type="GeneID" id="282476"/>
<dbReference type="CTD" id="6576"/>
<dbReference type="eggNOG" id="KOG0756">
    <property type="taxonomic scope" value="Eukaryota"/>
</dbReference>
<dbReference type="InParanoid" id="P79110"/>
<dbReference type="OrthoDB" id="44467at2759"/>
<dbReference type="Proteomes" id="UP000009136">
    <property type="component" value="Unplaced"/>
</dbReference>
<dbReference type="GO" id="GO:0005743">
    <property type="term" value="C:mitochondrial inner membrane"/>
    <property type="evidence" value="ECO:0000250"/>
    <property type="project" value="UniProtKB"/>
</dbReference>
<dbReference type="GO" id="GO:0005739">
    <property type="term" value="C:mitochondrion"/>
    <property type="evidence" value="ECO:0000314"/>
    <property type="project" value="UniProtKB"/>
</dbReference>
<dbReference type="GO" id="GO:0015297">
    <property type="term" value="F:antiporter activity"/>
    <property type="evidence" value="ECO:0007669"/>
    <property type="project" value="UniProtKB-KW"/>
</dbReference>
<dbReference type="GO" id="GO:0071913">
    <property type="term" value="F:citrate secondary active transmembrane transporter activity"/>
    <property type="evidence" value="ECO:0000314"/>
    <property type="project" value="UniProtKB"/>
</dbReference>
<dbReference type="GO" id="GO:0006843">
    <property type="term" value="P:mitochondrial citrate transmembrane transport"/>
    <property type="evidence" value="ECO:0000314"/>
    <property type="project" value="UniProtKB"/>
</dbReference>
<dbReference type="FunFam" id="1.50.40.10:FF:000007">
    <property type="entry name" value="Mitochondrial tricarboxylate transport protein-like"/>
    <property type="match status" value="1"/>
</dbReference>
<dbReference type="Gene3D" id="1.50.40.10">
    <property type="entry name" value="Mitochondrial carrier domain"/>
    <property type="match status" value="1"/>
</dbReference>
<dbReference type="InterPro" id="IPR002067">
    <property type="entry name" value="Mit_carrier"/>
</dbReference>
<dbReference type="InterPro" id="IPR018108">
    <property type="entry name" value="Mitochondrial_sb/sol_carrier"/>
</dbReference>
<dbReference type="InterPro" id="IPR023395">
    <property type="entry name" value="Mt_carrier_dom_sf"/>
</dbReference>
<dbReference type="InterPro" id="IPR049563">
    <property type="entry name" value="TXTP-like"/>
</dbReference>
<dbReference type="PANTHER" id="PTHR45788">
    <property type="entry name" value="SUCCINATE/FUMARATE MITOCHONDRIAL TRANSPORTER-RELATED"/>
    <property type="match status" value="1"/>
</dbReference>
<dbReference type="PANTHER" id="PTHR45788:SF4">
    <property type="entry name" value="TRICARBOXYLATE TRANSPORT PROTEIN, MITOCHONDRIAL"/>
    <property type="match status" value="1"/>
</dbReference>
<dbReference type="Pfam" id="PF00153">
    <property type="entry name" value="Mito_carr"/>
    <property type="match status" value="3"/>
</dbReference>
<dbReference type="PRINTS" id="PR00926">
    <property type="entry name" value="MITOCARRIER"/>
</dbReference>
<dbReference type="SUPFAM" id="SSF103506">
    <property type="entry name" value="Mitochondrial carrier"/>
    <property type="match status" value="1"/>
</dbReference>
<dbReference type="PROSITE" id="PS50920">
    <property type="entry name" value="SOLCAR"/>
    <property type="match status" value="3"/>
</dbReference>
<comment type="function">
    <text evidence="2 7 8">Mitochondrial electroneutral antiporter that exports citrate from the mitochondria into the cytosol in exchange for malate. Also able to mediate the exchange of citrate for isocitrate, phosphoenolpyruvate, cis-aconitate and to a lesser extent trans-aconitate, maleate and succinate (PubMed:2549027, PubMed:2729553). In the cytoplasm, citrate plays important roles in fatty acid and sterol synthesis, regulation of glycolysis, protein acetylation, and other physiopathological processes (By similarity).</text>
</comment>
<comment type="catalytic activity">
    <reaction evidence="7">
        <text>(S)-malate(in) + citrate(out) = (S)-malate(out) + citrate(in)</text>
        <dbReference type="Rhea" id="RHEA:72483"/>
        <dbReference type="ChEBI" id="CHEBI:15589"/>
        <dbReference type="ChEBI" id="CHEBI:16947"/>
    </reaction>
</comment>
<comment type="catalytic activity">
    <reaction evidence="7 8">
        <text>D-threo-isocitrate(in) + citrate(out) = D-threo-isocitrate(out) + citrate(in)</text>
        <dbReference type="Rhea" id="RHEA:72471"/>
        <dbReference type="ChEBI" id="CHEBI:15562"/>
        <dbReference type="ChEBI" id="CHEBI:16947"/>
    </reaction>
</comment>
<comment type="catalytic activity">
    <reaction evidence="7">
        <text>citrate(out) + succinate(in) = citrate(in) + succinate(out)</text>
        <dbReference type="Rhea" id="RHEA:28835"/>
        <dbReference type="ChEBI" id="CHEBI:16947"/>
        <dbReference type="ChEBI" id="CHEBI:30031"/>
    </reaction>
</comment>
<comment type="catalytic activity">
    <reaction evidence="7">
        <text>phosphoenolpyruvate(in) + citrate(out) = phosphoenolpyruvate(out) + citrate(in)</text>
        <dbReference type="Rhea" id="RHEA:72487"/>
        <dbReference type="ChEBI" id="CHEBI:16947"/>
        <dbReference type="ChEBI" id="CHEBI:58702"/>
    </reaction>
</comment>
<comment type="catalytic activity">
    <reaction evidence="2">
        <text>cis-aconitate(in) + citrate(out) = cis-aconitate(out) + citrate(in)</text>
        <dbReference type="Rhea" id="RHEA:72475"/>
        <dbReference type="ChEBI" id="CHEBI:16383"/>
        <dbReference type="ChEBI" id="CHEBI:16947"/>
    </reaction>
</comment>
<comment type="catalytic activity">
    <reaction evidence="2">
        <text>trans-aconitate(in) + citrate(out) = trans-aconitate(out) + citrate(in)</text>
        <dbReference type="Rhea" id="RHEA:72479"/>
        <dbReference type="ChEBI" id="CHEBI:15708"/>
        <dbReference type="ChEBI" id="CHEBI:16947"/>
    </reaction>
</comment>
<comment type="catalytic activity">
    <reaction evidence="2">
        <text>maleate(in) + citrate(out) = maleate(out) + citrate(in)</text>
        <dbReference type="Rhea" id="RHEA:72491"/>
        <dbReference type="ChEBI" id="CHEBI:16947"/>
        <dbReference type="ChEBI" id="CHEBI:30780"/>
    </reaction>
</comment>
<comment type="biophysicochemical properties">
    <kinetics>
        <KM evidence="8">35 uM for citrate</KM>
    </kinetics>
</comment>
<comment type="subcellular location">
    <subcellularLocation>
        <location evidence="3">Mitochondrion inner membrane</location>
        <topology evidence="4">Multi-pass membrane protein</topology>
    </subcellularLocation>
    <subcellularLocation>
        <location evidence="7">Mitochondrion membrane</location>
        <topology evidence="4">Multi-pass membrane protein</topology>
    </subcellularLocation>
</comment>
<comment type="PTM">
    <text evidence="1">Possesses a short cleavable presequence, which, however, is found to be dispensable both for targeting to mitochondria and insertion into the inner membrane. However, the presequence is required to keep SLC25A1 in a soluble state and thus in an import-competent state. Mature SLC25A1 lacking the presequence is prone to aggregation.</text>
</comment>
<comment type="similarity">
    <text evidence="10">Belongs to the mitochondrial carrier (TC 2.A.29) family.</text>
</comment>
<protein>
    <recommendedName>
        <fullName>Tricarboxylate transport protein, mitochondrial</fullName>
    </recommendedName>
    <alternativeName>
        <fullName>Citrate transport protein</fullName>
        <shortName>CTP</shortName>
    </alternativeName>
    <alternativeName>
        <fullName>Solute carrier family 25 member 1</fullName>
    </alternativeName>
    <alternativeName>
        <fullName evidence="9">Tricarboxylate carrier protein</fullName>
    </alternativeName>
</protein>
<name>TXTP_BOVIN</name>
<reference key="1">
    <citation type="journal article" date="1996" name="Biochim. Biophys. Acta">
        <title>Cloning and sequencing of the bovine cDNA encoding the mitochondrial tricarboxylate carrier protein.</title>
        <authorList>
            <person name="Iacobazzi V."/>
            <person name="de Palma A."/>
            <person name="Palmieri F."/>
        </authorList>
    </citation>
    <scope>NUCLEOTIDE SEQUENCE [MRNA]</scope>
</reference>
<reference key="2">
    <citation type="journal article" date="1989" name="Anal. Biochem.">
        <title>Novel reconstitution and enzymatic assay of the mitochondrial tricarboxylate carrier.</title>
        <authorList>
            <person name="Luethy R."/>
            <person name="Azzi A."/>
        </authorList>
    </citation>
    <scope>FUNCTION</scope>
    <scope>TRANSPORTER ACTIVITY</scope>
    <scope>BIOPHYSICOCHEMICAL PROPERTIES</scope>
</reference>
<reference key="3">
    <citation type="journal article" date="1989" name="J. Biol. Chem.">
        <title>Tricarboxylate carrier of bovine liver mitochondria. Purification and reconstitution.</title>
        <authorList>
            <person name="Claeys D."/>
            <person name="Azzi A."/>
        </authorList>
    </citation>
    <scope>FUNCTION</scope>
    <scope>TRANSPORTER ACTIVITY</scope>
    <scope>SUBCELLULAR LOCATION</scope>
</reference>
<proteinExistence type="evidence at protein level"/>
<organism>
    <name type="scientific">Bos taurus</name>
    <name type="common">Bovine</name>
    <dbReference type="NCBI Taxonomy" id="9913"/>
    <lineage>
        <taxon>Eukaryota</taxon>
        <taxon>Metazoa</taxon>
        <taxon>Chordata</taxon>
        <taxon>Craniata</taxon>
        <taxon>Vertebrata</taxon>
        <taxon>Euteleostomi</taxon>
        <taxon>Mammalia</taxon>
        <taxon>Eutheria</taxon>
        <taxon>Laurasiatheria</taxon>
        <taxon>Artiodactyla</taxon>
        <taxon>Ruminantia</taxon>
        <taxon>Pecora</taxon>
        <taxon>Bovidae</taxon>
        <taxon>Bovinae</taxon>
        <taxon>Bos</taxon>
    </lineage>
</organism>